<accession>A1STS1</accession>
<keyword id="KW-0963">Cytoplasm</keyword>
<keyword id="KW-0489">Methyltransferase</keyword>
<keyword id="KW-1185">Reference proteome</keyword>
<keyword id="KW-0694">RNA-binding</keyword>
<keyword id="KW-0698">rRNA processing</keyword>
<keyword id="KW-0949">S-adenosyl-L-methionine</keyword>
<keyword id="KW-0808">Transferase</keyword>
<comment type="function">
    <text evidence="1">Specifically dimethylates two adjacent adenosines (A1518 and A1519) in the loop of a conserved hairpin near the 3'-end of 16S rRNA in the 30S particle. May play a critical role in biogenesis of 30S subunits.</text>
</comment>
<comment type="catalytic activity">
    <reaction evidence="1">
        <text>adenosine(1518)/adenosine(1519) in 16S rRNA + 4 S-adenosyl-L-methionine = N(6)-dimethyladenosine(1518)/N(6)-dimethyladenosine(1519) in 16S rRNA + 4 S-adenosyl-L-homocysteine + 4 H(+)</text>
        <dbReference type="Rhea" id="RHEA:19609"/>
        <dbReference type="Rhea" id="RHEA-COMP:10232"/>
        <dbReference type="Rhea" id="RHEA-COMP:10233"/>
        <dbReference type="ChEBI" id="CHEBI:15378"/>
        <dbReference type="ChEBI" id="CHEBI:57856"/>
        <dbReference type="ChEBI" id="CHEBI:59789"/>
        <dbReference type="ChEBI" id="CHEBI:74411"/>
        <dbReference type="ChEBI" id="CHEBI:74493"/>
        <dbReference type="EC" id="2.1.1.182"/>
    </reaction>
</comment>
<comment type="subcellular location">
    <subcellularLocation>
        <location evidence="1">Cytoplasm</location>
    </subcellularLocation>
</comment>
<comment type="similarity">
    <text evidence="1">Belongs to the class I-like SAM-binding methyltransferase superfamily. rRNA adenine N(6)-methyltransferase family. RsmA subfamily.</text>
</comment>
<dbReference type="EC" id="2.1.1.182" evidence="1"/>
<dbReference type="EMBL" id="CP000510">
    <property type="protein sequence ID" value="ABM02886.1"/>
    <property type="molecule type" value="Genomic_DNA"/>
</dbReference>
<dbReference type="RefSeq" id="WP_011769449.1">
    <property type="nucleotide sequence ID" value="NC_008709.1"/>
</dbReference>
<dbReference type="SMR" id="A1STS1"/>
<dbReference type="STRING" id="357804.Ping_1047"/>
<dbReference type="KEGG" id="pin:Ping_1047"/>
<dbReference type="eggNOG" id="COG0030">
    <property type="taxonomic scope" value="Bacteria"/>
</dbReference>
<dbReference type="HOGENOM" id="CLU_041220_0_1_6"/>
<dbReference type="OrthoDB" id="9814755at2"/>
<dbReference type="Proteomes" id="UP000000639">
    <property type="component" value="Chromosome"/>
</dbReference>
<dbReference type="GO" id="GO:0005829">
    <property type="term" value="C:cytosol"/>
    <property type="evidence" value="ECO:0007669"/>
    <property type="project" value="TreeGrafter"/>
</dbReference>
<dbReference type="GO" id="GO:0052908">
    <property type="term" value="F:16S rRNA (adenine(1518)-N(6)/adenine(1519)-N(6))-dimethyltransferase activity"/>
    <property type="evidence" value="ECO:0007669"/>
    <property type="project" value="UniProtKB-EC"/>
</dbReference>
<dbReference type="GO" id="GO:0003723">
    <property type="term" value="F:RNA binding"/>
    <property type="evidence" value="ECO:0007669"/>
    <property type="project" value="UniProtKB-KW"/>
</dbReference>
<dbReference type="FunFam" id="1.10.8.100:FF:000001">
    <property type="entry name" value="Ribosomal RNA small subunit methyltransferase A"/>
    <property type="match status" value="1"/>
</dbReference>
<dbReference type="FunFam" id="3.40.50.150:FF:000006">
    <property type="entry name" value="Ribosomal RNA small subunit methyltransferase A"/>
    <property type="match status" value="1"/>
</dbReference>
<dbReference type="Gene3D" id="1.10.8.100">
    <property type="entry name" value="Ribosomal RNA adenine dimethylase-like, domain 2"/>
    <property type="match status" value="1"/>
</dbReference>
<dbReference type="Gene3D" id="3.40.50.150">
    <property type="entry name" value="Vaccinia Virus protein VP39"/>
    <property type="match status" value="1"/>
</dbReference>
<dbReference type="HAMAP" id="MF_00607">
    <property type="entry name" value="16SrRNA_methyltr_A"/>
    <property type="match status" value="1"/>
</dbReference>
<dbReference type="InterPro" id="IPR001737">
    <property type="entry name" value="KsgA/Erm"/>
</dbReference>
<dbReference type="InterPro" id="IPR023165">
    <property type="entry name" value="rRNA_Ade_diMease-like_C"/>
</dbReference>
<dbReference type="InterPro" id="IPR020596">
    <property type="entry name" value="rRNA_Ade_Mease_Trfase_CS"/>
</dbReference>
<dbReference type="InterPro" id="IPR020598">
    <property type="entry name" value="rRNA_Ade_methylase_Trfase_N"/>
</dbReference>
<dbReference type="InterPro" id="IPR011530">
    <property type="entry name" value="rRNA_adenine_dimethylase"/>
</dbReference>
<dbReference type="InterPro" id="IPR029063">
    <property type="entry name" value="SAM-dependent_MTases_sf"/>
</dbReference>
<dbReference type="NCBIfam" id="TIGR00755">
    <property type="entry name" value="ksgA"/>
    <property type="match status" value="1"/>
</dbReference>
<dbReference type="PANTHER" id="PTHR11727">
    <property type="entry name" value="DIMETHYLADENOSINE TRANSFERASE"/>
    <property type="match status" value="1"/>
</dbReference>
<dbReference type="PANTHER" id="PTHR11727:SF7">
    <property type="entry name" value="DIMETHYLADENOSINE TRANSFERASE-RELATED"/>
    <property type="match status" value="1"/>
</dbReference>
<dbReference type="Pfam" id="PF00398">
    <property type="entry name" value="RrnaAD"/>
    <property type="match status" value="1"/>
</dbReference>
<dbReference type="SMART" id="SM00650">
    <property type="entry name" value="rADc"/>
    <property type="match status" value="1"/>
</dbReference>
<dbReference type="SUPFAM" id="SSF53335">
    <property type="entry name" value="S-adenosyl-L-methionine-dependent methyltransferases"/>
    <property type="match status" value="1"/>
</dbReference>
<dbReference type="PROSITE" id="PS01131">
    <property type="entry name" value="RRNA_A_DIMETH"/>
    <property type="match status" value="1"/>
</dbReference>
<dbReference type="PROSITE" id="PS51689">
    <property type="entry name" value="SAM_RNA_A_N6_MT"/>
    <property type="match status" value="1"/>
</dbReference>
<evidence type="ECO:0000255" key="1">
    <source>
        <dbReference type="HAMAP-Rule" id="MF_00607"/>
    </source>
</evidence>
<organism>
    <name type="scientific">Psychromonas ingrahamii (strain DSM 17664 / CCUG 51855 / 37)</name>
    <dbReference type="NCBI Taxonomy" id="357804"/>
    <lineage>
        <taxon>Bacteria</taxon>
        <taxon>Pseudomonadati</taxon>
        <taxon>Pseudomonadota</taxon>
        <taxon>Gammaproteobacteria</taxon>
        <taxon>Alteromonadales</taxon>
        <taxon>Psychromonadaceae</taxon>
        <taxon>Psychromonas</taxon>
    </lineage>
</organism>
<protein>
    <recommendedName>
        <fullName evidence="1">Ribosomal RNA small subunit methyltransferase A</fullName>
        <ecNumber evidence="1">2.1.1.182</ecNumber>
    </recommendedName>
    <alternativeName>
        <fullName evidence="1">16S rRNA (adenine(1518)-N(6)/adenine(1519)-N(6))-dimethyltransferase</fullName>
    </alternativeName>
    <alternativeName>
        <fullName evidence="1">16S rRNA dimethyladenosine transferase</fullName>
    </alternativeName>
    <alternativeName>
        <fullName evidence="1">16S rRNA dimethylase</fullName>
    </alternativeName>
    <alternativeName>
        <fullName evidence="1">S-adenosylmethionine-6-N', N'-adenosyl(rRNA) dimethyltransferase</fullName>
    </alternativeName>
</protein>
<sequence>MNDKTHLGHTARKRFGQNFLHDDYIIDSIVGAIAPQWEDNIVEIGPGLGALTEPVASKVKCLNVIELDRDLAARLAEHPVLGDKLNITQADALQFDFGKLASTERPLRVFGNLPYNISTPLMFHLFEYADKISDMHFMLQKEVVNRLCAGPNCKAYGRLTVMAQYYCRIIPVLEVPPTAFKPAPKVDSAVVRLEPYDTPPFIAKSLKCLTQVCSMAFNQRRKTIRNGLRDLLSIEQLQEIGIDTTKRAENISVEEYVNIANYVFDLKENK</sequence>
<name>RSMA_PSYIN</name>
<gene>
    <name evidence="1" type="primary">rsmA</name>
    <name evidence="1" type="synonym">ksgA</name>
    <name type="ordered locus">Ping_1047</name>
</gene>
<reference key="1">
    <citation type="journal article" date="2008" name="BMC Genomics">
        <title>Genomics of an extreme psychrophile, Psychromonas ingrahamii.</title>
        <authorList>
            <person name="Riley M."/>
            <person name="Staley J.T."/>
            <person name="Danchin A."/>
            <person name="Wang T.Z."/>
            <person name="Brettin T.S."/>
            <person name="Hauser L.J."/>
            <person name="Land M.L."/>
            <person name="Thompson L.S."/>
        </authorList>
    </citation>
    <scope>NUCLEOTIDE SEQUENCE [LARGE SCALE GENOMIC DNA]</scope>
    <source>
        <strain>DSM 17664 / CCUG 51855 / 37</strain>
    </source>
</reference>
<feature type="chain" id="PRO_1000056655" description="Ribosomal RNA small subunit methyltransferase A">
    <location>
        <begin position="1"/>
        <end position="270"/>
    </location>
</feature>
<feature type="binding site" evidence="1">
    <location>
        <position position="18"/>
    </location>
    <ligand>
        <name>S-adenosyl-L-methionine</name>
        <dbReference type="ChEBI" id="CHEBI:59789"/>
    </ligand>
</feature>
<feature type="binding site" evidence="1">
    <location>
        <position position="20"/>
    </location>
    <ligand>
        <name>S-adenosyl-L-methionine</name>
        <dbReference type="ChEBI" id="CHEBI:59789"/>
    </ligand>
</feature>
<feature type="binding site" evidence="1">
    <location>
        <position position="45"/>
    </location>
    <ligand>
        <name>S-adenosyl-L-methionine</name>
        <dbReference type="ChEBI" id="CHEBI:59789"/>
    </ligand>
</feature>
<feature type="binding site" evidence="1">
    <location>
        <position position="66"/>
    </location>
    <ligand>
        <name>S-adenosyl-L-methionine</name>
        <dbReference type="ChEBI" id="CHEBI:59789"/>
    </ligand>
</feature>
<feature type="binding site" evidence="1">
    <location>
        <position position="91"/>
    </location>
    <ligand>
        <name>S-adenosyl-L-methionine</name>
        <dbReference type="ChEBI" id="CHEBI:59789"/>
    </ligand>
</feature>
<feature type="binding site" evidence="1">
    <location>
        <position position="112"/>
    </location>
    <ligand>
        <name>S-adenosyl-L-methionine</name>
        <dbReference type="ChEBI" id="CHEBI:59789"/>
    </ligand>
</feature>
<proteinExistence type="inferred from homology"/>